<comment type="function">
    <text evidence="1">Covalent carrier of the coenzyme of citrate lyase.</text>
</comment>
<comment type="subunit">
    <text evidence="1">Oligomer with a subunit composition of (alpha,beta,gamma)6.</text>
</comment>
<comment type="subcellular location">
    <subcellularLocation>
        <location evidence="1">Cytoplasm</location>
    </subcellularLocation>
</comment>
<comment type="similarity">
    <text evidence="1">Belongs to the CitD family.</text>
</comment>
<feature type="chain" id="PRO_1000133977" description="Citrate lyase acyl carrier protein">
    <location>
        <begin position="1"/>
        <end position="102"/>
    </location>
</feature>
<feature type="modified residue" description="O-(phosphoribosyl dephospho-coenzyme A)serine" evidence="1">
    <location>
        <position position="14"/>
    </location>
</feature>
<accession>B5XLM6</accession>
<name>CITD_STRPZ</name>
<dbReference type="EMBL" id="CP000829">
    <property type="protein sequence ID" value="ACI61238.1"/>
    <property type="molecule type" value="Genomic_DNA"/>
</dbReference>
<dbReference type="SMR" id="B5XLM6"/>
<dbReference type="KEGG" id="soz:Spy49_0934"/>
<dbReference type="HOGENOM" id="CLU_158489_0_0_9"/>
<dbReference type="Proteomes" id="UP000001039">
    <property type="component" value="Chromosome"/>
</dbReference>
<dbReference type="GO" id="GO:0005737">
    <property type="term" value="C:cytoplasm"/>
    <property type="evidence" value="ECO:0007669"/>
    <property type="project" value="UniProtKB-SubCell"/>
</dbReference>
<dbReference type="HAMAP" id="MF_00805">
    <property type="entry name" value="CitD"/>
    <property type="match status" value="1"/>
</dbReference>
<dbReference type="InterPro" id="IPR006495">
    <property type="entry name" value="CitD"/>
</dbReference>
<dbReference type="InterPro" id="IPR023439">
    <property type="entry name" value="Mal_deCO2ase/Cit_lyase_ACP"/>
</dbReference>
<dbReference type="NCBIfam" id="TIGR01608">
    <property type="entry name" value="citD"/>
    <property type="match status" value="1"/>
</dbReference>
<dbReference type="NCBIfam" id="NF009726">
    <property type="entry name" value="PRK13253.1"/>
    <property type="match status" value="1"/>
</dbReference>
<dbReference type="Pfam" id="PF06857">
    <property type="entry name" value="ACP"/>
    <property type="match status" value="1"/>
</dbReference>
<dbReference type="PIRSF" id="PIRSF002736">
    <property type="entry name" value="Citrt_lyas_gamma"/>
    <property type="match status" value="1"/>
</dbReference>
<protein>
    <recommendedName>
        <fullName evidence="1">Citrate lyase acyl carrier protein</fullName>
    </recommendedName>
    <alternativeName>
        <fullName evidence="1">Citrate lyase gamma chain</fullName>
    </alternativeName>
</protein>
<gene>
    <name evidence="1" type="primary">citD</name>
    <name type="ordered locus">Spy49_0934</name>
</gene>
<proteinExistence type="inferred from homology"/>
<organism>
    <name type="scientific">Streptococcus pyogenes serotype M49 (strain NZ131)</name>
    <dbReference type="NCBI Taxonomy" id="471876"/>
    <lineage>
        <taxon>Bacteria</taxon>
        <taxon>Bacillati</taxon>
        <taxon>Bacillota</taxon>
        <taxon>Bacilli</taxon>
        <taxon>Lactobacillales</taxon>
        <taxon>Streptococcaceae</taxon>
        <taxon>Streptococcus</taxon>
    </lineage>
</organism>
<evidence type="ECO:0000255" key="1">
    <source>
        <dbReference type="HAMAP-Rule" id="MF_00805"/>
    </source>
</evidence>
<reference key="1">
    <citation type="journal article" date="2008" name="J. Bacteriol.">
        <title>Genome sequence of a nephritogenic and highly transformable M49 strain of Streptococcus pyogenes.</title>
        <authorList>
            <person name="McShan W.M."/>
            <person name="Ferretti J.J."/>
            <person name="Karasawa T."/>
            <person name="Suvorov A.N."/>
            <person name="Lin S."/>
            <person name="Qin B."/>
            <person name="Jia H."/>
            <person name="Kenton S."/>
            <person name="Najar F."/>
            <person name="Wu H."/>
            <person name="Scott J."/>
            <person name="Roe B.A."/>
            <person name="Savic D.J."/>
        </authorList>
    </citation>
    <scope>NUCLEOTIDE SEQUENCE [LARGE SCALE GENOMIC DNA]</scope>
    <source>
        <strain>NZ131</strain>
    </source>
</reference>
<keyword id="KW-0963">Cytoplasm</keyword>
<keyword id="KW-0597">Phosphoprotein</keyword>
<sequence>MDIKQTAVAGSLESSDLMITVSPNDEQTITITLDSSVEKQFGNHIRQLIHQTLVNLKVTAAKVEAVDKGALDCTIQARTIAAVHRAAGIDQYDWKEIDSWNV</sequence>